<organism>
    <name type="scientific">Mus musculus</name>
    <name type="common">Mouse</name>
    <dbReference type="NCBI Taxonomy" id="10090"/>
    <lineage>
        <taxon>Eukaryota</taxon>
        <taxon>Metazoa</taxon>
        <taxon>Chordata</taxon>
        <taxon>Craniata</taxon>
        <taxon>Vertebrata</taxon>
        <taxon>Euteleostomi</taxon>
        <taxon>Mammalia</taxon>
        <taxon>Eutheria</taxon>
        <taxon>Euarchontoglires</taxon>
        <taxon>Glires</taxon>
        <taxon>Rodentia</taxon>
        <taxon>Myomorpha</taxon>
        <taxon>Muroidea</taxon>
        <taxon>Muridae</taxon>
        <taxon>Murinae</taxon>
        <taxon>Mus</taxon>
        <taxon>Mus</taxon>
    </lineage>
</organism>
<keyword id="KW-0378">Hydrolase</keyword>
<keyword id="KW-0479">Metal-binding</keyword>
<keyword id="KW-0482">Metalloprotease</keyword>
<keyword id="KW-0645">Protease</keyword>
<keyword id="KW-1185">Reference proteome</keyword>
<keyword id="KW-0862">Zinc</keyword>
<gene>
    <name type="primary">Amz1</name>
</gene>
<evidence type="ECO:0000250" key="1">
    <source>
        <dbReference type="UniProtKB" id="Q8TXW1"/>
    </source>
</evidence>
<evidence type="ECO:0000255" key="2">
    <source>
        <dbReference type="PROSITE-ProRule" id="PRU10095"/>
    </source>
</evidence>
<evidence type="ECO:0000256" key="3">
    <source>
        <dbReference type="SAM" id="MobiDB-lite"/>
    </source>
</evidence>
<evidence type="ECO:0000305" key="4"/>
<name>AMZ1_MOUSE</name>
<feature type="chain" id="PRO_0000159615" description="Archaemetzincin-1">
    <location>
        <begin position="1"/>
        <end position="502"/>
    </location>
</feature>
<feature type="region of interest" description="Disordered" evidence="3">
    <location>
        <begin position="336"/>
        <end position="383"/>
    </location>
</feature>
<feature type="active site" description="Proton acceptor" evidence="2">
    <location>
        <position position="263"/>
    </location>
</feature>
<feature type="binding site" evidence="1">
    <location>
        <position position="262"/>
    </location>
    <ligand>
        <name>Zn(2+)</name>
        <dbReference type="ChEBI" id="CHEBI:29105"/>
        <label>1</label>
        <note>catalytic</note>
    </ligand>
</feature>
<feature type="binding site" evidence="1">
    <location>
        <position position="266"/>
    </location>
    <ligand>
        <name>Zn(2+)</name>
        <dbReference type="ChEBI" id="CHEBI:29105"/>
        <label>1</label>
        <note>catalytic</note>
    </ligand>
</feature>
<feature type="binding site" evidence="1">
    <location>
        <position position="273"/>
    </location>
    <ligand>
        <name>Zn(2+)</name>
        <dbReference type="ChEBI" id="CHEBI:29105"/>
        <label>2</label>
    </ligand>
</feature>
<feature type="binding site" evidence="1">
    <location>
        <position position="278"/>
    </location>
    <ligand>
        <name>Zn(2+)</name>
        <dbReference type="ChEBI" id="CHEBI:29105"/>
        <label>2</label>
    </ligand>
</feature>
<feature type="binding site" evidence="1">
    <location>
        <position position="297"/>
    </location>
    <ligand>
        <name>Zn(2+)</name>
        <dbReference type="ChEBI" id="CHEBI:29105"/>
        <label>2</label>
    </ligand>
</feature>
<feature type="binding site" evidence="1">
    <location>
        <position position="300"/>
    </location>
    <ligand>
        <name>Zn(2+)</name>
        <dbReference type="ChEBI" id="CHEBI:29105"/>
        <label>2</label>
    </ligand>
</feature>
<proteinExistence type="evidence at transcript level"/>
<protein>
    <recommendedName>
        <fullName>Archaemetzincin-1</fullName>
        <ecNumber evidence="1">3.4.-.-</ecNumber>
    </recommendedName>
    <alternativeName>
        <fullName>Archeobacterial metalloproteinase-like protein 1</fullName>
    </alternativeName>
</protein>
<accession>Q8BVF9</accession>
<accession>Q811F9</accession>
<accession>Q8BMM5</accession>
<comment type="function">
    <text evidence="1">Probable zinc metalloprotease.</text>
</comment>
<comment type="cofactor">
    <cofactor evidence="1">
        <name>Zn(2+)</name>
        <dbReference type="ChEBI" id="CHEBI:29105"/>
    </cofactor>
    <text evidence="1">Binds 2 Zn(2+) ions per subunit. One is catalytic, whereas the other seems to have a structural role.</text>
</comment>
<comment type="similarity">
    <text evidence="4">Belongs to the peptidase M54 family.</text>
</comment>
<comment type="sequence caution" evidence="4">
    <conflict type="erroneous initiation">
        <sequence resource="EMBL-CDS" id="BAC27003"/>
    </conflict>
</comment>
<sequence length="502" mass="55284">MVQCKPPQEFSFGPRALKDALISCDLALKQMYTSAFSPSERLFLSEAYNPNRTLFSTLLIHSAYDWLLSRPEAPEDFETFHASLQLRKQSLARKHIYLQPIDLSEGLAGCPLLDHLRSCAEAFFLGLRVKCLPSVAAASINCCSRPSRDTDGLQLHTDGILSFLKNNKPGDALCVLGLTLADLYPHDAWTFTFGRFLPGHEVGVCSFARFSGEFLQAGSSVPDSALLEAAAAGGPETLPRERGRTLCFSALGMVQCCKVTCHELCHLLGLGSCRWLRCLLQGALSLDEVLRRPLDLCPICLRKLHHLLGFRLLERYKRLHAWTRVMVEIWSGQEAGEPSVSEDTLPFSADSGMGCESDTEPVTSPSEPVTPDGWSHPFPDGPEPVSEDGLGSLMASEVSLTLGGPVDAMEEYGQWLTACIQTLEREGAEEELLQVDAAVDALSRWEMFTGQLPVTKQHVPCGKDNVGLRRVLGDKFSSLRRRLSSRRFAKASSSHCRWGAEN</sequence>
<dbReference type="EC" id="3.4.-.-" evidence="1"/>
<dbReference type="EMBL" id="AJ879912">
    <property type="protein sequence ID" value="CAI53757.1"/>
    <property type="molecule type" value="mRNA"/>
</dbReference>
<dbReference type="EMBL" id="AK030521">
    <property type="protein sequence ID" value="BAC27003.1"/>
    <property type="status" value="ALT_INIT"/>
    <property type="molecule type" value="mRNA"/>
</dbReference>
<dbReference type="EMBL" id="AK078332">
    <property type="protein sequence ID" value="BAC37222.1"/>
    <property type="molecule type" value="mRNA"/>
</dbReference>
<dbReference type="EMBL" id="AK170176">
    <property type="protein sequence ID" value="BAE41617.1"/>
    <property type="molecule type" value="mRNA"/>
</dbReference>
<dbReference type="EMBL" id="BC046428">
    <property type="protein sequence ID" value="AAH46428.1"/>
    <property type="molecule type" value="mRNA"/>
</dbReference>
<dbReference type="CCDS" id="CCDS19824.1"/>
<dbReference type="RefSeq" id="NP_775581.1">
    <property type="nucleotide sequence ID" value="NM_173405.2"/>
</dbReference>
<dbReference type="FunCoup" id="Q8BVF9">
    <property type="interactions" value="3"/>
</dbReference>
<dbReference type="STRING" id="10090.ENSMUSP00000113911"/>
<dbReference type="MEROPS" id="M54.003"/>
<dbReference type="PhosphoSitePlus" id="Q8BVF9"/>
<dbReference type="PaxDb" id="10090-ENSMUSP00000113911"/>
<dbReference type="ProteomicsDB" id="282087"/>
<dbReference type="Antibodypedia" id="11135">
    <property type="antibodies" value="49 antibodies from 18 providers"/>
</dbReference>
<dbReference type="DNASU" id="231842"/>
<dbReference type="Ensembl" id="ENSMUST00000060918.11">
    <property type="protein sequence ID" value="ENSMUSP00000053110.5"/>
    <property type="gene ID" value="ENSMUSG00000050022.17"/>
</dbReference>
<dbReference type="Ensembl" id="ENSMUST00000120630.3">
    <property type="protein sequence ID" value="ENSMUSP00000113911.3"/>
    <property type="gene ID" value="ENSMUSG00000050022.17"/>
</dbReference>
<dbReference type="GeneID" id="231842"/>
<dbReference type="KEGG" id="mmu:231842"/>
<dbReference type="UCSC" id="uc009aif.1">
    <property type="organism name" value="mouse"/>
</dbReference>
<dbReference type="AGR" id="MGI:2442258"/>
<dbReference type="CTD" id="155185"/>
<dbReference type="MGI" id="MGI:2442258">
    <property type="gene designation" value="Amz1"/>
</dbReference>
<dbReference type="VEuPathDB" id="HostDB:ENSMUSG00000050022"/>
<dbReference type="eggNOG" id="ENOG502QV2Q">
    <property type="taxonomic scope" value="Eukaryota"/>
</dbReference>
<dbReference type="GeneTree" id="ENSGT00530000063996"/>
<dbReference type="HOGENOM" id="CLU_029710_0_0_1"/>
<dbReference type="InParanoid" id="Q8BVF9"/>
<dbReference type="OMA" id="LAKWEMF"/>
<dbReference type="OrthoDB" id="2365600at2759"/>
<dbReference type="PhylomeDB" id="Q8BVF9"/>
<dbReference type="TreeFam" id="TF328603"/>
<dbReference type="BioGRID-ORCS" id="231842">
    <property type="hits" value="1 hit in 79 CRISPR screens"/>
</dbReference>
<dbReference type="ChiTaRS" id="Amz1">
    <property type="organism name" value="mouse"/>
</dbReference>
<dbReference type="PRO" id="PR:Q8BVF9"/>
<dbReference type="Proteomes" id="UP000000589">
    <property type="component" value="Chromosome 5"/>
</dbReference>
<dbReference type="RNAct" id="Q8BVF9">
    <property type="molecule type" value="protein"/>
</dbReference>
<dbReference type="Bgee" id="ENSMUSG00000050022">
    <property type="expression patterns" value="Expressed in ectoplacental cone and 102 other cell types or tissues"/>
</dbReference>
<dbReference type="ExpressionAtlas" id="Q8BVF9">
    <property type="expression patterns" value="baseline and differential"/>
</dbReference>
<dbReference type="GO" id="GO:0046872">
    <property type="term" value="F:metal ion binding"/>
    <property type="evidence" value="ECO:0007669"/>
    <property type="project" value="UniProtKB-KW"/>
</dbReference>
<dbReference type="GO" id="GO:0008237">
    <property type="term" value="F:metallopeptidase activity"/>
    <property type="evidence" value="ECO:0007669"/>
    <property type="project" value="UniProtKB-KW"/>
</dbReference>
<dbReference type="GO" id="GO:0006508">
    <property type="term" value="P:proteolysis"/>
    <property type="evidence" value="ECO:0007669"/>
    <property type="project" value="UniProtKB-KW"/>
</dbReference>
<dbReference type="CDD" id="cd11375">
    <property type="entry name" value="Peptidase_M54"/>
    <property type="match status" value="1"/>
</dbReference>
<dbReference type="Gene3D" id="3.40.390.10">
    <property type="entry name" value="Collagenase (Catalytic Domain)"/>
    <property type="match status" value="1"/>
</dbReference>
<dbReference type="InterPro" id="IPR052009">
    <property type="entry name" value="Archaemetzincin"/>
</dbReference>
<dbReference type="InterPro" id="IPR024079">
    <property type="entry name" value="MetalloPept_cat_dom_sf"/>
</dbReference>
<dbReference type="InterPro" id="IPR012962">
    <property type="entry name" value="Pept_M54_archaemetzincn"/>
</dbReference>
<dbReference type="PANTHER" id="PTHR32205:SF4">
    <property type="entry name" value="ARCHAEMETZINCIN-1"/>
    <property type="match status" value="1"/>
</dbReference>
<dbReference type="PANTHER" id="PTHR32205">
    <property type="entry name" value="ARCHAEMETZINCIN-2-RELATED"/>
    <property type="match status" value="1"/>
</dbReference>
<dbReference type="PROSITE" id="PS00142">
    <property type="entry name" value="ZINC_PROTEASE"/>
    <property type="match status" value="1"/>
</dbReference>
<reference key="1">
    <citation type="journal article" date="2005" name="J. Biol. Chem.">
        <title>Identification and characterization of human archaemetzincin-1 and - 2, two novel members of a family of metalloproteases widely distributed in Archaea.</title>
        <authorList>
            <person name="Diaz-Perales A."/>
            <person name="Quesada V."/>
            <person name="Peinado J.R."/>
            <person name="Ugalde A.P."/>
            <person name="Alvarez J."/>
            <person name="Suarez M.F."/>
            <person name="Gomis-Rueth X."/>
            <person name="Lopez-Otin C."/>
        </authorList>
    </citation>
    <scope>RETRACTED PAPER</scope>
    <source>
        <strain>C57BL/6J</strain>
    </source>
</reference>
<reference key="2">
    <citation type="journal article" date="2019" name="J. Biol. Chem.">
        <authorList>
            <person name="Diaz-Perales A."/>
            <person name="Quesada V."/>
            <person name="Peinado J.R."/>
            <person name="Ugalde A.P."/>
            <person name="Alvarez J."/>
            <person name="Suarez M.F."/>
            <person name="Gomis-Rueth F.X."/>
            <person name="Lopez-Otin C."/>
        </authorList>
    </citation>
    <scope>RETRACTION NOTICE OF PUBMED:15972818</scope>
</reference>
<reference key="3">
    <citation type="journal article" date="2005" name="Science">
        <title>The transcriptional landscape of the mammalian genome.</title>
        <authorList>
            <person name="Carninci P."/>
            <person name="Kasukawa T."/>
            <person name="Katayama S."/>
            <person name="Gough J."/>
            <person name="Frith M.C."/>
            <person name="Maeda N."/>
            <person name="Oyama R."/>
            <person name="Ravasi T."/>
            <person name="Lenhard B."/>
            <person name="Wells C."/>
            <person name="Kodzius R."/>
            <person name="Shimokawa K."/>
            <person name="Bajic V.B."/>
            <person name="Brenner S.E."/>
            <person name="Batalov S."/>
            <person name="Forrest A.R."/>
            <person name="Zavolan M."/>
            <person name="Davis M.J."/>
            <person name="Wilming L.G."/>
            <person name="Aidinis V."/>
            <person name="Allen J.E."/>
            <person name="Ambesi-Impiombato A."/>
            <person name="Apweiler R."/>
            <person name="Aturaliya R.N."/>
            <person name="Bailey T.L."/>
            <person name="Bansal M."/>
            <person name="Baxter L."/>
            <person name="Beisel K.W."/>
            <person name="Bersano T."/>
            <person name="Bono H."/>
            <person name="Chalk A.M."/>
            <person name="Chiu K.P."/>
            <person name="Choudhary V."/>
            <person name="Christoffels A."/>
            <person name="Clutterbuck D.R."/>
            <person name="Crowe M.L."/>
            <person name="Dalla E."/>
            <person name="Dalrymple B.P."/>
            <person name="de Bono B."/>
            <person name="Della Gatta G."/>
            <person name="di Bernardo D."/>
            <person name="Down T."/>
            <person name="Engstrom P."/>
            <person name="Fagiolini M."/>
            <person name="Faulkner G."/>
            <person name="Fletcher C.F."/>
            <person name="Fukushima T."/>
            <person name="Furuno M."/>
            <person name="Futaki S."/>
            <person name="Gariboldi M."/>
            <person name="Georgii-Hemming P."/>
            <person name="Gingeras T.R."/>
            <person name="Gojobori T."/>
            <person name="Green R.E."/>
            <person name="Gustincich S."/>
            <person name="Harbers M."/>
            <person name="Hayashi Y."/>
            <person name="Hensch T.K."/>
            <person name="Hirokawa N."/>
            <person name="Hill D."/>
            <person name="Huminiecki L."/>
            <person name="Iacono M."/>
            <person name="Ikeo K."/>
            <person name="Iwama A."/>
            <person name="Ishikawa T."/>
            <person name="Jakt M."/>
            <person name="Kanapin A."/>
            <person name="Katoh M."/>
            <person name="Kawasawa Y."/>
            <person name="Kelso J."/>
            <person name="Kitamura H."/>
            <person name="Kitano H."/>
            <person name="Kollias G."/>
            <person name="Krishnan S.P."/>
            <person name="Kruger A."/>
            <person name="Kummerfeld S.K."/>
            <person name="Kurochkin I.V."/>
            <person name="Lareau L.F."/>
            <person name="Lazarevic D."/>
            <person name="Lipovich L."/>
            <person name="Liu J."/>
            <person name="Liuni S."/>
            <person name="McWilliam S."/>
            <person name="Madan Babu M."/>
            <person name="Madera M."/>
            <person name="Marchionni L."/>
            <person name="Matsuda H."/>
            <person name="Matsuzawa S."/>
            <person name="Miki H."/>
            <person name="Mignone F."/>
            <person name="Miyake S."/>
            <person name="Morris K."/>
            <person name="Mottagui-Tabar S."/>
            <person name="Mulder N."/>
            <person name="Nakano N."/>
            <person name="Nakauchi H."/>
            <person name="Ng P."/>
            <person name="Nilsson R."/>
            <person name="Nishiguchi S."/>
            <person name="Nishikawa S."/>
            <person name="Nori F."/>
            <person name="Ohara O."/>
            <person name="Okazaki Y."/>
            <person name="Orlando V."/>
            <person name="Pang K.C."/>
            <person name="Pavan W.J."/>
            <person name="Pavesi G."/>
            <person name="Pesole G."/>
            <person name="Petrovsky N."/>
            <person name="Piazza S."/>
            <person name="Reed J."/>
            <person name="Reid J.F."/>
            <person name="Ring B.Z."/>
            <person name="Ringwald M."/>
            <person name="Rost B."/>
            <person name="Ruan Y."/>
            <person name="Salzberg S.L."/>
            <person name="Sandelin A."/>
            <person name="Schneider C."/>
            <person name="Schoenbach C."/>
            <person name="Sekiguchi K."/>
            <person name="Semple C.A."/>
            <person name="Seno S."/>
            <person name="Sessa L."/>
            <person name="Sheng Y."/>
            <person name="Shibata Y."/>
            <person name="Shimada H."/>
            <person name="Shimada K."/>
            <person name="Silva D."/>
            <person name="Sinclair B."/>
            <person name="Sperling S."/>
            <person name="Stupka E."/>
            <person name="Sugiura K."/>
            <person name="Sultana R."/>
            <person name="Takenaka Y."/>
            <person name="Taki K."/>
            <person name="Tammoja K."/>
            <person name="Tan S.L."/>
            <person name="Tang S."/>
            <person name="Taylor M.S."/>
            <person name="Tegner J."/>
            <person name="Teichmann S.A."/>
            <person name="Ueda H.R."/>
            <person name="van Nimwegen E."/>
            <person name="Verardo R."/>
            <person name="Wei C.L."/>
            <person name="Yagi K."/>
            <person name="Yamanishi H."/>
            <person name="Zabarovsky E."/>
            <person name="Zhu S."/>
            <person name="Zimmer A."/>
            <person name="Hide W."/>
            <person name="Bult C."/>
            <person name="Grimmond S.M."/>
            <person name="Teasdale R.D."/>
            <person name="Liu E.T."/>
            <person name="Brusic V."/>
            <person name="Quackenbush J."/>
            <person name="Wahlestedt C."/>
            <person name="Mattick J.S."/>
            <person name="Hume D.A."/>
            <person name="Kai C."/>
            <person name="Sasaki D."/>
            <person name="Tomaru Y."/>
            <person name="Fukuda S."/>
            <person name="Kanamori-Katayama M."/>
            <person name="Suzuki M."/>
            <person name="Aoki J."/>
            <person name="Arakawa T."/>
            <person name="Iida J."/>
            <person name="Imamura K."/>
            <person name="Itoh M."/>
            <person name="Kato T."/>
            <person name="Kawaji H."/>
            <person name="Kawagashira N."/>
            <person name="Kawashima T."/>
            <person name="Kojima M."/>
            <person name="Kondo S."/>
            <person name="Konno H."/>
            <person name="Nakano K."/>
            <person name="Ninomiya N."/>
            <person name="Nishio T."/>
            <person name="Okada M."/>
            <person name="Plessy C."/>
            <person name="Shibata K."/>
            <person name="Shiraki T."/>
            <person name="Suzuki S."/>
            <person name="Tagami M."/>
            <person name="Waki K."/>
            <person name="Watahiki A."/>
            <person name="Okamura-Oho Y."/>
            <person name="Suzuki H."/>
            <person name="Kawai J."/>
            <person name="Hayashizaki Y."/>
        </authorList>
    </citation>
    <scope>NUCLEOTIDE SEQUENCE [LARGE SCALE MRNA]</scope>
    <source>
        <strain>C57BL/6J</strain>
        <strain>NOD</strain>
        <tissue>Cerebellum</tissue>
        <tissue>Pituitary</tissue>
    </source>
</reference>
<reference key="4">
    <citation type="journal article" date="2004" name="Genome Res.">
        <title>The status, quality, and expansion of the NIH full-length cDNA project: the Mammalian Gene Collection (MGC).</title>
        <authorList>
            <consortium name="The MGC Project Team"/>
        </authorList>
    </citation>
    <scope>NUCLEOTIDE SEQUENCE [LARGE SCALE MRNA] OF 226-502</scope>
    <source>
        <strain>FVB/N</strain>
        <tissue>Kidney</tissue>
    </source>
</reference>